<evidence type="ECO:0000255" key="1">
    <source>
        <dbReference type="HAMAP-Rule" id="MF_00033"/>
    </source>
</evidence>
<keyword id="KW-0131">Cell cycle</keyword>
<keyword id="KW-0132">Cell division</keyword>
<keyword id="KW-0997">Cell inner membrane</keyword>
<keyword id="KW-1003">Cell membrane</keyword>
<keyword id="KW-0133">Cell shape</keyword>
<keyword id="KW-0961">Cell wall biogenesis/degradation</keyword>
<keyword id="KW-0328">Glycosyltransferase</keyword>
<keyword id="KW-0472">Membrane</keyword>
<keyword id="KW-0573">Peptidoglycan synthesis</keyword>
<keyword id="KW-1185">Reference proteome</keyword>
<keyword id="KW-0808">Transferase</keyword>
<reference key="1">
    <citation type="journal article" date="2007" name="Nat. Biotechnol.">
        <title>Genome sequence and identification of candidate vaccine antigens from the animal pathogen Dichelobacter nodosus.</title>
        <authorList>
            <person name="Myers G.S.A."/>
            <person name="Parker D."/>
            <person name="Al-Hasani K."/>
            <person name="Kennan R.M."/>
            <person name="Seemann T."/>
            <person name="Ren Q."/>
            <person name="Badger J.H."/>
            <person name="Selengut J.D."/>
            <person name="Deboy R.T."/>
            <person name="Tettelin H."/>
            <person name="Boyce J.D."/>
            <person name="McCarl V.P."/>
            <person name="Han X."/>
            <person name="Nelson W.C."/>
            <person name="Madupu R."/>
            <person name="Mohamoud Y."/>
            <person name="Holley T."/>
            <person name="Fedorova N."/>
            <person name="Khouri H."/>
            <person name="Bottomley S.P."/>
            <person name="Whittington R.J."/>
            <person name="Adler B."/>
            <person name="Songer J.G."/>
            <person name="Rood J.I."/>
            <person name="Paulsen I.T."/>
        </authorList>
    </citation>
    <scope>NUCLEOTIDE SEQUENCE [LARGE SCALE GENOMIC DNA]</scope>
    <source>
        <strain>VCS1703A</strain>
    </source>
</reference>
<comment type="function">
    <text evidence="1">Cell wall formation. Catalyzes the transfer of a GlcNAc subunit on undecaprenyl-pyrophosphoryl-MurNAc-pentapeptide (lipid intermediate I) to form undecaprenyl-pyrophosphoryl-MurNAc-(pentapeptide)GlcNAc (lipid intermediate II).</text>
</comment>
<comment type="catalytic activity">
    <reaction evidence="1">
        <text>di-trans,octa-cis-undecaprenyl diphospho-N-acetyl-alpha-D-muramoyl-L-alanyl-D-glutamyl-meso-2,6-diaminopimeloyl-D-alanyl-D-alanine + UDP-N-acetyl-alpha-D-glucosamine = di-trans,octa-cis-undecaprenyl diphospho-[N-acetyl-alpha-D-glucosaminyl-(1-&gt;4)]-N-acetyl-alpha-D-muramoyl-L-alanyl-D-glutamyl-meso-2,6-diaminopimeloyl-D-alanyl-D-alanine + UDP + H(+)</text>
        <dbReference type="Rhea" id="RHEA:31227"/>
        <dbReference type="ChEBI" id="CHEBI:15378"/>
        <dbReference type="ChEBI" id="CHEBI:57705"/>
        <dbReference type="ChEBI" id="CHEBI:58223"/>
        <dbReference type="ChEBI" id="CHEBI:61387"/>
        <dbReference type="ChEBI" id="CHEBI:61388"/>
        <dbReference type="EC" id="2.4.1.227"/>
    </reaction>
</comment>
<comment type="pathway">
    <text evidence="1">Cell wall biogenesis; peptidoglycan biosynthesis.</text>
</comment>
<comment type="subcellular location">
    <subcellularLocation>
        <location evidence="1">Cell inner membrane</location>
        <topology evidence="1">Peripheral membrane protein</topology>
        <orientation evidence="1">Cytoplasmic side</orientation>
    </subcellularLocation>
</comment>
<comment type="similarity">
    <text evidence="1">Belongs to the glycosyltransferase 28 family. MurG subfamily.</text>
</comment>
<organism>
    <name type="scientific">Dichelobacter nodosus (strain VCS1703A)</name>
    <dbReference type="NCBI Taxonomy" id="246195"/>
    <lineage>
        <taxon>Bacteria</taxon>
        <taxon>Pseudomonadati</taxon>
        <taxon>Pseudomonadota</taxon>
        <taxon>Gammaproteobacteria</taxon>
        <taxon>Cardiobacteriales</taxon>
        <taxon>Cardiobacteriaceae</taxon>
        <taxon>Dichelobacter</taxon>
    </lineage>
</organism>
<proteinExistence type="inferred from homology"/>
<name>MURG_DICNV</name>
<dbReference type="EC" id="2.4.1.227" evidence="1"/>
<dbReference type="EMBL" id="CP000513">
    <property type="protein sequence ID" value="ABQ13133.1"/>
    <property type="molecule type" value="Genomic_DNA"/>
</dbReference>
<dbReference type="RefSeq" id="WP_012031294.1">
    <property type="nucleotide sequence ID" value="NC_009446.1"/>
</dbReference>
<dbReference type="SMR" id="A5EY03"/>
<dbReference type="STRING" id="246195.DNO_0981"/>
<dbReference type="CAZy" id="GT28">
    <property type="family name" value="Glycosyltransferase Family 28"/>
</dbReference>
<dbReference type="KEGG" id="dno:DNO_0981"/>
<dbReference type="eggNOG" id="COG0707">
    <property type="taxonomic scope" value="Bacteria"/>
</dbReference>
<dbReference type="HOGENOM" id="CLU_037404_2_0_6"/>
<dbReference type="OrthoDB" id="9808936at2"/>
<dbReference type="UniPathway" id="UPA00219"/>
<dbReference type="Proteomes" id="UP000000248">
    <property type="component" value="Chromosome"/>
</dbReference>
<dbReference type="GO" id="GO:0005886">
    <property type="term" value="C:plasma membrane"/>
    <property type="evidence" value="ECO:0007669"/>
    <property type="project" value="UniProtKB-SubCell"/>
</dbReference>
<dbReference type="GO" id="GO:0051991">
    <property type="term" value="F:UDP-N-acetyl-D-glucosamine:N-acetylmuramoyl-L-alanyl-D-glutamyl-meso-2,6-diaminopimelyl-D-alanyl-D-alanine-diphosphoundecaprenol 4-beta-N-acetylglucosaminlytransferase activity"/>
    <property type="evidence" value="ECO:0007669"/>
    <property type="project" value="RHEA"/>
</dbReference>
<dbReference type="GO" id="GO:0050511">
    <property type="term" value="F:undecaprenyldiphospho-muramoylpentapeptide beta-N-acetylglucosaminyltransferase activity"/>
    <property type="evidence" value="ECO:0007669"/>
    <property type="project" value="UniProtKB-UniRule"/>
</dbReference>
<dbReference type="GO" id="GO:0005975">
    <property type="term" value="P:carbohydrate metabolic process"/>
    <property type="evidence" value="ECO:0007669"/>
    <property type="project" value="InterPro"/>
</dbReference>
<dbReference type="GO" id="GO:0051301">
    <property type="term" value="P:cell division"/>
    <property type="evidence" value="ECO:0007669"/>
    <property type="project" value="UniProtKB-KW"/>
</dbReference>
<dbReference type="GO" id="GO:0071555">
    <property type="term" value="P:cell wall organization"/>
    <property type="evidence" value="ECO:0007669"/>
    <property type="project" value="UniProtKB-KW"/>
</dbReference>
<dbReference type="GO" id="GO:0030259">
    <property type="term" value="P:lipid glycosylation"/>
    <property type="evidence" value="ECO:0007669"/>
    <property type="project" value="UniProtKB-UniRule"/>
</dbReference>
<dbReference type="GO" id="GO:0009252">
    <property type="term" value="P:peptidoglycan biosynthetic process"/>
    <property type="evidence" value="ECO:0007669"/>
    <property type="project" value="UniProtKB-UniRule"/>
</dbReference>
<dbReference type="GO" id="GO:0008360">
    <property type="term" value="P:regulation of cell shape"/>
    <property type="evidence" value="ECO:0007669"/>
    <property type="project" value="UniProtKB-KW"/>
</dbReference>
<dbReference type="CDD" id="cd03785">
    <property type="entry name" value="GT28_MurG"/>
    <property type="match status" value="1"/>
</dbReference>
<dbReference type="Gene3D" id="3.40.50.2000">
    <property type="entry name" value="Glycogen Phosphorylase B"/>
    <property type="match status" value="2"/>
</dbReference>
<dbReference type="HAMAP" id="MF_00033">
    <property type="entry name" value="MurG"/>
    <property type="match status" value="1"/>
</dbReference>
<dbReference type="InterPro" id="IPR006009">
    <property type="entry name" value="GlcNAc_MurG"/>
</dbReference>
<dbReference type="InterPro" id="IPR007235">
    <property type="entry name" value="Glyco_trans_28_C"/>
</dbReference>
<dbReference type="InterPro" id="IPR004276">
    <property type="entry name" value="GlycoTrans_28_N"/>
</dbReference>
<dbReference type="NCBIfam" id="TIGR01133">
    <property type="entry name" value="murG"/>
    <property type="match status" value="1"/>
</dbReference>
<dbReference type="PANTHER" id="PTHR21015:SF22">
    <property type="entry name" value="GLYCOSYLTRANSFERASE"/>
    <property type="match status" value="1"/>
</dbReference>
<dbReference type="PANTHER" id="PTHR21015">
    <property type="entry name" value="UDP-N-ACETYLGLUCOSAMINE--N-ACETYLMURAMYL-(PENTAPEPTIDE) PYROPHOSPHORYL-UNDECAPRENOL N-ACETYLGLUCOSAMINE TRANSFERASE 1"/>
    <property type="match status" value="1"/>
</dbReference>
<dbReference type="Pfam" id="PF04101">
    <property type="entry name" value="Glyco_tran_28_C"/>
    <property type="match status" value="1"/>
</dbReference>
<dbReference type="Pfam" id="PF03033">
    <property type="entry name" value="Glyco_transf_28"/>
    <property type="match status" value="1"/>
</dbReference>
<dbReference type="SUPFAM" id="SSF53756">
    <property type="entry name" value="UDP-Glycosyltransferase/glycogen phosphorylase"/>
    <property type="match status" value="1"/>
</dbReference>
<gene>
    <name evidence="1" type="primary">murG</name>
    <name type="ordered locus">DNO_0981</name>
</gene>
<feature type="chain" id="PRO_0000315091" description="UDP-N-acetylglucosamine--N-acetylmuramyl-(pentapeptide) pyrophosphoryl-undecaprenol N-acetylglucosamine transferase">
    <location>
        <begin position="1"/>
        <end position="363"/>
    </location>
</feature>
<feature type="binding site" evidence="1">
    <location>
        <begin position="15"/>
        <end position="17"/>
    </location>
    <ligand>
        <name>UDP-N-acetyl-alpha-D-glucosamine</name>
        <dbReference type="ChEBI" id="CHEBI:57705"/>
    </ligand>
</feature>
<feature type="binding site" evidence="1">
    <location>
        <position position="127"/>
    </location>
    <ligand>
        <name>UDP-N-acetyl-alpha-D-glucosamine</name>
        <dbReference type="ChEBI" id="CHEBI:57705"/>
    </ligand>
</feature>
<feature type="binding site" evidence="1">
    <location>
        <position position="169"/>
    </location>
    <ligand>
        <name>UDP-N-acetyl-alpha-D-glucosamine</name>
        <dbReference type="ChEBI" id="CHEBI:57705"/>
    </ligand>
</feature>
<feature type="binding site" evidence="1">
    <location>
        <position position="197"/>
    </location>
    <ligand>
        <name>UDP-N-acetyl-alpha-D-glucosamine</name>
        <dbReference type="ChEBI" id="CHEBI:57705"/>
    </ligand>
</feature>
<feature type="binding site" evidence="1">
    <location>
        <position position="251"/>
    </location>
    <ligand>
        <name>UDP-N-acetyl-alpha-D-glucosamine</name>
        <dbReference type="ChEBI" id="CHEBI:57705"/>
    </ligand>
</feature>
<feature type="binding site" evidence="1">
    <location>
        <begin position="270"/>
        <end position="275"/>
    </location>
    <ligand>
        <name>UDP-N-acetyl-alpha-D-glucosamine</name>
        <dbReference type="ChEBI" id="CHEBI:57705"/>
    </ligand>
</feature>
<feature type="binding site" evidence="1">
    <location>
        <position position="296"/>
    </location>
    <ligand>
        <name>UDP-N-acetyl-alpha-D-glucosamine</name>
        <dbReference type="ChEBI" id="CHEBI:57705"/>
    </ligand>
</feature>
<protein>
    <recommendedName>
        <fullName evidence="1">UDP-N-acetylglucosamine--N-acetylmuramyl-(pentapeptide) pyrophosphoryl-undecaprenol N-acetylglucosamine transferase</fullName>
        <ecNumber evidence="1">2.4.1.227</ecNumber>
    </recommendedName>
    <alternativeName>
        <fullName evidence="1">Undecaprenyl-PP-MurNAc-pentapeptide-UDPGlcNAc GlcNAc transferase</fullName>
    </alternativeName>
</protein>
<accession>A5EY03</accession>
<sequence>MILKGKKLLFMAGGTGGHVYPALAVARAAAEQGSIIHWLGNQSGFEGKKVPEAGFIFHDIAVYGLRGNGVIGWLKAPFMIGRAVFQAKKIMQHIQPDVVIGMGGFASGPGGIAAKILNIPLLIHEQNAVMGLTNALLSRVANTILLASQQAAAKIALKYPYRVTGNPVREDITLLPAPEERFHYRSGRIRLLVLGGSQGAKAINLLLPQALSLLPEEQRPQVLHQTGARWLEKTQTEYAALNVHAEIVPFIDDMAKAYANADWVIARSGALTVSEIATAGLAALFIPFPYAVDDHQTMNAQCLAEVGAAAILEEKTLTADILATAIQSRQDRSALLTQAERARLCSDEKALGEILRAIKELCR</sequence>